<feature type="signal peptide" evidence="4">
    <location>
        <begin position="1"/>
        <end position="19"/>
    </location>
</feature>
<feature type="chain" id="PRO_0000252038" description="Thioredoxin reductase-like selenoprotein T" evidence="4">
    <location>
        <begin position="20"/>
        <end position="195"/>
    </location>
</feature>
<feature type="transmembrane region" description="Helical" evidence="4 9">
    <location>
        <begin position="85"/>
        <end position="103"/>
    </location>
</feature>
<feature type="non-standard amino acid" description="Selenocysteine" evidence="10">
    <location>
        <position position="49"/>
    </location>
</feature>
<feature type="cross-link" description="Cysteinyl-selenocysteine (Cys-Sec)" evidence="4">
    <location>
        <begin position="46"/>
        <end position="49"/>
    </location>
</feature>
<feature type="mutagenesis site" description="Highly reduces thioredoxin reductase activity." evidence="6">
    <original>CVSU</original>
    <variation>SVSS</variation>
    <location>
        <begin position="46"/>
        <end position="49"/>
    </location>
</feature>
<feature type="mutagenesis site" description="Abolishes regulation of calcium mobilization." evidence="5">
    <original>U</original>
    <variation>A</variation>
    <location>
        <position position="49"/>
    </location>
</feature>
<comment type="function">
    <text evidence="2 3 5 6 7">Selenoprotein with thioredoxin reductase-like oxidoreductase activity (PubMed:26866473). Protects dopaminergic neurons against oxidative stress and cell death (By similarity). Involved in ADCYAP1/PACAP-induced calcium mobilization and neuroendocrine secretion (PubMed:18198219). Plays a role in fibroblast anchorage and redox regulation (By similarity). In gastric smooth muscle, modulates the contraction processes through the regulation of calcium release and MYLK activation (PubMed:26779623). In pancreatic islets, involved in the control of glucose homeostasis, contributes to prolonged ADCYAP1/PACAP-induced insulin secretion (By similarity).</text>
</comment>
<comment type="catalytic activity">
    <reaction evidence="7">
        <text>[thioredoxin]-dithiol + NADP(+) = [thioredoxin]-disulfide + NADPH + H(+)</text>
        <dbReference type="Rhea" id="RHEA:20345"/>
        <dbReference type="Rhea" id="RHEA-COMP:10698"/>
        <dbReference type="Rhea" id="RHEA-COMP:10700"/>
        <dbReference type="ChEBI" id="CHEBI:15378"/>
        <dbReference type="ChEBI" id="CHEBI:29950"/>
        <dbReference type="ChEBI" id="CHEBI:50058"/>
        <dbReference type="ChEBI" id="CHEBI:57783"/>
        <dbReference type="ChEBI" id="CHEBI:58349"/>
        <dbReference type="EC" id="1.8.1.9"/>
    </reaction>
</comment>
<comment type="subcellular location">
    <subcellularLocation>
        <location evidence="5">Endoplasmic reticulum membrane</location>
        <topology evidence="4">Single-pass membrane protein</topology>
    </subcellularLocation>
</comment>
<comment type="tissue specificity">
    <text evidence="5">Ubiquitous, detected in all tissues tested.</text>
</comment>
<comment type="developmental stage">
    <text evidence="5">Ubiquitously expressed as early as 7 dpc.</text>
</comment>
<comment type="induction">
    <text evidence="5">Rapidly induced by ADCYAP1/PACAP neuropeptide and cAMP.</text>
</comment>
<comment type="PTM">
    <text evidence="1">May contain a selenide-sulfide bond between Cys-46 and Sec-49. This bond is speculated to serve as redox-active pair (By similarity).</text>
</comment>
<comment type="similarity">
    <text evidence="8">Belongs to the SelWTH family. Selenoprotein T subfamily.</text>
</comment>
<evidence type="ECO:0000250" key="1"/>
<evidence type="ECO:0000250" key="2">
    <source>
        <dbReference type="UniProtKB" id="P62341"/>
    </source>
</evidence>
<evidence type="ECO:0000250" key="3">
    <source>
        <dbReference type="UniProtKB" id="P62342"/>
    </source>
</evidence>
<evidence type="ECO:0000255" key="4"/>
<evidence type="ECO:0000269" key="5">
    <source>
    </source>
</evidence>
<evidence type="ECO:0000269" key="6">
    <source>
    </source>
</evidence>
<evidence type="ECO:0000269" key="7">
    <source>
    </source>
</evidence>
<evidence type="ECO:0000305" key="8"/>
<evidence type="ECO:0000305" key="9">
    <source>
    </source>
</evidence>
<evidence type="ECO:0000312" key="10">
    <source>
        <dbReference type="EMBL" id="AAY45888.1"/>
    </source>
</evidence>
<evidence type="ECO:0000312" key="11">
    <source>
        <dbReference type="RGD" id="1359128"/>
    </source>
</evidence>
<name>SELT_RAT</name>
<reference key="1">
    <citation type="journal article" date="2008" name="FASEB J.">
        <title>Selenoprotein T is a PACAP-regulated gene involved in intracellular Ca2+ mobilization and neuroendocrine secretion.</title>
        <authorList>
            <person name="Grumolato L."/>
            <person name="Ghzili H."/>
            <person name="Montero-Hadjadje M."/>
            <person name="Gasman S."/>
            <person name="Lesage J."/>
            <person name="Tanguy Y."/>
            <person name="Galas L."/>
            <person name="Ait-Ali D."/>
            <person name="Leprince J."/>
            <person name="Guerineau N.C."/>
            <person name="Elkahloun A.G."/>
            <person name="Fournier A."/>
            <person name="Vieau D."/>
            <person name="Vaudry H."/>
            <person name="Anouar Y."/>
        </authorList>
    </citation>
    <scope>NUCLEOTIDE SEQUENCE [MRNA]</scope>
    <scope>SUBCELLULAR LOCATION</scope>
    <scope>INDUCTION BY CAMP</scope>
    <scope>DEVELOPMENTAL STAGE</scope>
    <scope>TISSUE SPECIFICITY</scope>
    <scope>MUTAGENESIS OF SEC-49</scope>
</reference>
<reference key="2">
    <citation type="journal article" date="2016" name="Antioxid. Redox Signal.">
        <title>Selenoprotein T exerts an essential oxidoreductase activity that protects dopaminergic neurons in mouse models of Parkinson's Disease.</title>
        <authorList>
            <person name="Boukhzar L."/>
            <person name="Hamieh A."/>
            <person name="Cartier D."/>
            <person name="Tanguy Y."/>
            <person name="Alsharif I."/>
            <person name="Castex M."/>
            <person name="Arabo A."/>
            <person name="El Hajji S."/>
            <person name="Bonnet J.J."/>
            <person name="Errami M."/>
            <person name="Falluel-Morel A."/>
            <person name="Chagraoui A."/>
            <person name="Lihrmann I."/>
            <person name="Anouar Y."/>
        </authorList>
    </citation>
    <scope>FUNCTION</scope>
    <scope>CATALYTIC ACTIVITY</scope>
    <scope>MUTAGENESIS OF 46-CYS--SEC-49</scope>
</reference>
<reference key="3">
    <citation type="journal article" date="2016" name="Biol. Trace Elem. Res.">
        <title>Se enhances MLCK activation by regulating selenoprotein T (SelT) in the gastric smooth muscle of rats.</title>
        <authorList>
            <person name="Li J.P."/>
            <person name="Zhou J.X."/>
            <person name="Wang Q."/>
            <person name="Gu G.Q."/>
            <person name="Yang S.J."/>
            <person name="Li C.Y."/>
            <person name="Qiu C.W."/>
            <person name="Deng G.Z."/>
            <person name="Guo M.Y."/>
        </authorList>
    </citation>
    <scope>FUNCTION</scope>
</reference>
<keyword id="KW-0256">Endoplasmic reticulum</keyword>
<keyword id="KW-0472">Membrane</keyword>
<keyword id="KW-0521">NADP</keyword>
<keyword id="KW-0560">Oxidoreductase</keyword>
<keyword id="KW-0676">Redox-active center</keyword>
<keyword id="KW-1185">Reference proteome</keyword>
<keyword id="KW-0712">Selenocysteine</keyword>
<keyword id="KW-0732">Signal</keyword>
<keyword id="KW-0812">Transmembrane</keyword>
<keyword id="KW-1133">Transmembrane helix</keyword>
<gene>
    <name evidence="11" type="primary">Selenot</name>
    <name evidence="11" type="synonym">Selt</name>
</gene>
<accession>Q1H5H1</accession>
<proteinExistence type="evidence at protein level"/>
<protein>
    <recommendedName>
        <fullName evidence="8">Thioredoxin reductase-like selenoprotein T</fullName>
        <shortName evidence="2">SelT</shortName>
        <ecNumber evidence="7">1.8.1.9</ecNumber>
    </recommendedName>
</protein>
<dbReference type="EC" id="1.8.1.9" evidence="7"/>
<dbReference type="EMBL" id="AY995234">
    <property type="protein sequence ID" value="AAY45888.1"/>
    <property type="molecule type" value="mRNA"/>
</dbReference>
<dbReference type="RefSeq" id="NP_001014275.2">
    <property type="nucleotide sequence ID" value="NM_001014253.3"/>
</dbReference>
<dbReference type="FunCoup" id="Q1H5H1">
    <property type="interactions" value="1977"/>
</dbReference>
<dbReference type="STRING" id="10116.ENSRNOP00000072567"/>
<dbReference type="PhosphoSitePlus" id="Q1H5H1"/>
<dbReference type="jPOST" id="Q1H5H1"/>
<dbReference type="PaxDb" id="10116-ENSRNOP00000018248"/>
<dbReference type="Ensembl" id="ENSRNOT00000018248.7">
    <property type="protein sequence ID" value="ENSRNOP00000018248.6"/>
    <property type="gene ID" value="ENSRNOG00000013507.8"/>
</dbReference>
<dbReference type="GeneID" id="365802"/>
<dbReference type="KEGG" id="rno:365802"/>
<dbReference type="UCSC" id="RGD:1359128">
    <property type="organism name" value="rat"/>
</dbReference>
<dbReference type="AGR" id="RGD:1359128"/>
<dbReference type="CTD" id="51714"/>
<dbReference type="RGD" id="1359128">
    <property type="gene designation" value="Selenot"/>
</dbReference>
<dbReference type="eggNOG" id="KOG3286">
    <property type="taxonomic scope" value="Eukaryota"/>
</dbReference>
<dbReference type="GeneTree" id="ENSGT00390000011725"/>
<dbReference type="InParanoid" id="Q1H5H1"/>
<dbReference type="OMA" id="LKFQICC"/>
<dbReference type="OrthoDB" id="60822at2759"/>
<dbReference type="PhylomeDB" id="Q1H5H1"/>
<dbReference type="PRO" id="PR:Q1H5H1"/>
<dbReference type="Proteomes" id="UP000002494">
    <property type="component" value="Chromosome 2"/>
</dbReference>
<dbReference type="GO" id="GO:0005783">
    <property type="term" value="C:endoplasmic reticulum"/>
    <property type="evidence" value="ECO:0000266"/>
    <property type="project" value="RGD"/>
</dbReference>
<dbReference type="GO" id="GO:0005789">
    <property type="term" value="C:endoplasmic reticulum membrane"/>
    <property type="evidence" value="ECO:0000314"/>
    <property type="project" value="UniProtKB"/>
</dbReference>
<dbReference type="GO" id="GO:0004791">
    <property type="term" value="F:thioredoxin-disulfide reductase (NADPH) activity"/>
    <property type="evidence" value="ECO:0000314"/>
    <property type="project" value="UniProtKB"/>
</dbReference>
<dbReference type="GO" id="GO:0045454">
    <property type="term" value="P:cell redox homeostasis"/>
    <property type="evidence" value="ECO:0000250"/>
    <property type="project" value="UniProtKB"/>
</dbReference>
<dbReference type="GO" id="GO:0098869">
    <property type="term" value="P:cellular oxidant detoxification"/>
    <property type="evidence" value="ECO:0000314"/>
    <property type="project" value="UniProtKB"/>
</dbReference>
<dbReference type="GO" id="GO:0042593">
    <property type="term" value="P:glucose homeostasis"/>
    <property type="evidence" value="ECO:0000250"/>
    <property type="project" value="UniProtKB"/>
</dbReference>
<dbReference type="GO" id="GO:0035773">
    <property type="term" value="P:insulin secretion involved in cellular response to glucose stimulus"/>
    <property type="evidence" value="ECO:0000250"/>
    <property type="project" value="UniProtKB"/>
</dbReference>
<dbReference type="GO" id="GO:0031016">
    <property type="term" value="P:pancreas development"/>
    <property type="evidence" value="ECO:0000250"/>
    <property type="project" value="UniProtKB"/>
</dbReference>
<dbReference type="GO" id="GO:0007204">
    <property type="term" value="P:positive regulation of cytosolic calcium ion concentration"/>
    <property type="evidence" value="ECO:0000315"/>
    <property type="project" value="UniProtKB"/>
</dbReference>
<dbReference type="GO" id="GO:0060124">
    <property type="term" value="P:positive regulation of growth hormone secretion"/>
    <property type="evidence" value="ECO:0000315"/>
    <property type="project" value="UniProtKB"/>
</dbReference>
<dbReference type="GO" id="GO:0009749">
    <property type="term" value="P:response to glucose"/>
    <property type="evidence" value="ECO:0000250"/>
    <property type="project" value="UniProtKB"/>
</dbReference>
<dbReference type="FunFam" id="3.40.30.10:FF:000085">
    <property type="entry name" value="Selenoprotein T"/>
    <property type="match status" value="1"/>
</dbReference>
<dbReference type="Gene3D" id="3.40.30.10">
    <property type="entry name" value="Glutaredoxin"/>
    <property type="match status" value="1"/>
</dbReference>
<dbReference type="InterPro" id="IPR011893">
    <property type="entry name" value="Selenoprotein_Rdx-typ"/>
</dbReference>
<dbReference type="InterPro" id="IPR019389">
    <property type="entry name" value="Selenoprotein_T"/>
</dbReference>
<dbReference type="InterPro" id="IPR036249">
    <property type="entry name" value="Thioredoxin-like_sf"/>
</dbReference>
<dbReference type="NCBIfam" id="TIGR02174">
    <property type="entry name" value="CXXU_selWTH"/>
    <property type="match status" value="1"/>
</dbReference>
<dbReference type="PANTHER" id="PTHR13544">
    <property type="entry name" value="SELENOPROTEIN T"/>
    <property type="match status" value="1"/>
</dbReference>
<dbReference type="PANTHER" id="PTHR13544:SF0">
    <property type="entry name" value="THIOREDOXIN REDUCTASE-LIKE SELENOPROTEIN T"/>
    <property type="match status" value="1"/>
</dbReference>
<dbReference type="Pfam" id="PF10262">
    <property type="entry name" value="Rdx"/>
    <property type="match status" value="1"/>
</dbReference>
<dbReference type="SUPFAM" id="SSF52833">
    <property type="entry name" value="Thioredoxin-like"/>
    <property type="match status" value="1"/>
</dbReference>
<sequence>MRLLLLLLVAASAVVRSEASANLGGVPSKRLKMQYATGPLLKFQICVSUGYRRVFEEYMRVISQRYPDIRIEGENYLPQPIYRHIASFLSVFKLVLIGLIIVGKDPFAFFGMQAPSIWQWGQENKVYACMMVFFLSNMIENQCMSTGAFEITLNDVPVWSKLESGHLPSMQQLVQILDNEMKLNVHMDSIPHHRS</sequence>
<organism>
    <name type="scientific">Rattus norvegicus</name>
    <name type="common">Rat</name>
    <dbReference type="NCBI Taxonomy" id="10116"/>
    <lineage>
        <taxon>Eukaryota</taxon>
        <taxon>Metazoa</taxon>
        <taxon>Chordata</taxon>
        <taxon>Craniata</taxon>
        <taxon>Vertebrata</taxon>
        <taxon>Euteleostomi</taxon>
        <taxon>Mammalia</taxon>
        <taxon>Eutheria</taxon>
        <taxon>Euarchontoglires</taxon>
        <taxon>Glires</taxon>
        <taxon>Rodentia</taxon>
        <taxon>Myomorpha</taxon>
        <taxon>Muroidea</taxon>
        <taxon>Muridae</taxon>
        <taxon>Murinae</taxon>
        <taxon>Rattus</taxon>
    </lineage>
</organism>